<reference key="1">
    <citation type="submission" date="2008-05" db="EMBL/GenBank/DDBJ databases">
        <title>Complete sequence of Rhodopseudomonas palustris TIE-1.</title>
        <authorList>
            <consortium name="US DOE Joint Genome Institute"/>
            <person name="Lucas S."/>
            <person name="Copeland A."/>
            <person name="Lapidus A."/>
            <person name="Glavina del Rio T."/>
            <person name="Dalin E."/>
            <person name="Tice H."/>
            <person name="Pitluck S."/>
            <person name="Chain P."/>
            <person name="Malfatti S."/>
            <person name="Shin M."/>
            <person name="Vergez L."/>
            <person name="Lang D."/>
            <person name="Schmutz J."/>
            <person name="Larimer F."/>
            <person name="Land M."/>
            <person name="Hauser L."/>
            <person name="Kyrpides N."/>
            <person name="Mikhailova N."/>
            <person name="Emerson D."/>
            <person name="Newman D.K."/>
            <person name="Roden E."/>
            <person name="Richardson P."/>
        </authorList>
    </citation>
    <scope>NUCLEOTIDE SEQUENCE [LARGE SCALE GENOMIC DNA]</scope>
    <source>
        <strain>TIE-1</strain>
    </source>
</reference>
<dbReference type="EC" id="3.1.11.6" evidence="1"/>
<dbReference type="EMBL" id="CP001096">
    <property type="protein sequence ID" value="ACE99579.1"/>
    <property type="molecule type" value="Genomic_DNA"/>
</dbReference>
<dbReference type="RefSeq" id="WP_011156488.1">
    <property type="nucleotide sequence ID" value="NC_011004.1"/>
</dbReference>
<dbReference type="SMR" id="B3QFY8"/>
<dbReference type="KEGG" id="rpt:Rpal_1023"/>
<dbReference type="HOGENOM" id="CLU_145918_0_3_5"/>
<dbReference type="OrthoDB" id="9808145at2"/>
<dbReference type="Proteomes" id="UP000001725">
    <property type="component" value="Chromosome"/>
</dbReference>
<dbReference type="GO" id="GO:0005829">
    <property type="term" value="C:cytosol"/>
    <property type="evidence" value="ECO:0007669"/>
    <property type="project" value="TreeGrafter"/>
</dbReference>
<dbReference type="GO" id="GO:0009318">
    <property type="term" value="C:exodeoxyribonuclease VII complex"/>
    <property type="evidence" value="ECO:0007669"/>
    <property type="project" value="InterPro"/>
</dbReference>
<dbReference type="GO" id="GO:0008855">
    <property type="term" value="F:exodeoxyribonuclease VII activity"/>
    <property type="evidence" value="ECO:0007669"/>
    <property type="project" value="UniProtKB-UniRule"/>
</dbReference>
<dbReference type="GO" id="GO:0006308">
    <property type="term" value="P:DNA catabolic process"/>
    <property type="evidence" value="ECO:0007669"/>
    <property type="project" value="UniProtKB-UniRule"/>
</dbReference>
<dbReference type="FunFam" id="1.10.287.1040:FF:000004">
    <property type="entry name" value="Exodeoxyribonuclease 7 small subunit"/>
    <property type="match status" value="1"/>
</dbReference>
<dbReference type="Gene3D" id="1.10.287.1040">
    <property type="entry name" value="Exonuclease VII, small subunit"/>
    <property type="match status" value="1"/>
</dbReference>
<dbReference type="HAMAP" id="MF_00337">
    <property type="entry name" value="Exonuc_7_S"/>
    <property type="match status" value="1"/>
</dbReference>
<dbReference type="InterPro" id="IPR003761">
    <property type="entry name" value="Exonuc_VII_S"/>
</dbReference>
<dbReference type="InterPro" id="IPR037004">
    <property type="entry name" value="Exonuc_VII_ssu_sf"/>
</dbReference>
<dbReference type="NCBIfam" id="NF002139">
    <property type="entry name" value="PRK00977.1-3"/>
    <property type="match status" value="1"/>
</dbReference>
<dbReference type="NCBIfam" id="NF002140">
    <property type="entry name" value="PRK00977.1-4"/>
    <property type="match status" value="1"/>
</dbReference>
<dbReference type="NCBIfam" id="TIGR01280">
    <property type="entry name" value="xseB"/>
    <property type="match status" value="1"/>
</dbReference>
<dbReference type="PANTHER" id="PTHR34137">
    <property type="entry name" value="EXODEOXYRIBONUCLEASE 7 SMALL SUBUNIT"/>
    <property type="match status" value="1"/>
</dbReference>
<dbReference type="PANTHER" id="PTHR34137:SF1">
    <property type="entry name" value="EXODEOXYRIBONUCLEASE 7 SMALL SUBUNIT"/>
    <property type="match status" value="1"/>
</dbReference>
<dbReference type="Pfam" id="PF02609">
    <property type="entry name" value="Exonuc_VII_S"/>
    <property type="match status" value="1"/>
</dbReference>
<dbReference type="PIRSF" id="PIRSF006488">
    <property type="entry name" value="Exonuc_VII_S"/>
    <property type="match status" value="1"/>
</dbReference>
<dbReference type="SUPFAM" id="SSF116842">
    <property type="entry name" value="XseB-like"/>
    <property type="match status" value="1"/>
</dbReference>
<keyword id="KW-0963">Cytoplasm</keyword>
<keyword id="KW-0269">Exonuclease</keyword>
<keyword id="KW-0378">Hydrolase</keyword>
<keyword id="KW-0540">Nuclease</keyword>
<accession>B3QFY8</accession>
<gene>
    <name evidence="1" type="primary">xseB</name>
    <name type="ordered locus">Rpal_1023</name>
</gene>
<protein>
    <recommendedName>
        <fullName evidence="1">Exodeoxyribonuclease 7 small subunit</fullName>
        <ecNumber evidence="1">3.1.11.6</ecNumber>
    </recommendedName>
    <alternativeName>
        <fullName evidence="1">Exodeoxyribonuclease VII small subunit</fullName>
        <shortName evidence="1">Exonuclease VII small subunit</shortName>
    </alternativeName>
</protein>
<feature type="chain" id="PRO_1000119948" description="Exodeoxyribonuclease 7 small subunit">
    <location>
        <begin position="1"/>
        <end position="83"/>
    </location>
</feature>
<name>EX7S_RHOPT</name>
<proteinExistence type="inferred from homology"/>
<evidence type="ECO:0000255" key="1">
    <source>
        <dbReference type="HAMAP-Rule" id="MF_00337"/>
    </source>
</evidence>
<sequence>MAEAATTDVKKLSFERALEELETIVKRLEDGKVPLEESVTIYERGEALKRRCEDLLRQAEARVDKITTDAQGAPTGTEPLDVQ</sequence>
<comment type="function">
    <text evidence="1">Bidirectionally degrades single-stranded DNA into large acid-insoluble oligonucleotides, which are then degraded further into small acid-soluble oligonucleotides.</text>
</comment>
<comment type="catalytic activity">
    <reaction evidence="1">
        <text>Exonucleolytic cleavage in either 5'- to 3'- or 3'- to 5'-direction to yield nucleoside 5'-phosphates.</text>
        <dbReference type="EC" id="3.1.11.6"/>
    </reaction>
</comment>
<comment type="subunit">
    <text evidence="1">Heterooligomer composed of large and small subunits.</text>
</comment>
<comment type="subcellular location">
    <subcellularLocation>
        <location evidence="1">Cytoplasm</location>
    </subcellularLocation>
</comment>
<comment type="similarity">
    <text evidence="1">Belongs to the XseB family.</text>
</comment>
<organism>
    <name type="scientific">Rhodopseudomonas palustris (strain TIE-1)</name>
    <dbReference type="NCBI Taxonomy" id="395960"/>
    <lineage>
        <taxon>Bacteria</taxon>
        <taxon>Pseudomonadati</taxon>
        <taxon>Pseudomonadota</taxon>
        <taxon>Alphaproteobacteria</taxon>
        <taxon>Hyphomicrobiales</taxon>
        <taxon>Nitrobacteraceae</taxon>
        <taxon>Rhodopseudomonas</taxon>
    </lineage>
</organism>